<comment type="function">
    <text evidence="1">Involved in the biogenesis of the 60S ribosomal subunit. May play a part in the quality control of pre-60S particles (By similarity).</text>
</comment>
<comment type="subunit">
    <text evidence="2">Component of the pre-66S ribosomal particle. Interacts with ppp1/nop7 and nop52/rrp1. Interacts with rsa4 (via WD repeats).</text>
</comment>
<comment type="subcellular location">
    <subcellularLocation>
        <location evidence="5">Nucleus</location>
        <location evidence="5">Nucleolus</location>
    </subcellularLocation>
</comment>
<comment type="similarity">
    <text evidence="7">Belongs to the eukaryotic ribosomal protein eS8 family. Ribosome biogenesis protein NSA2 subfamily.</text>
</comment>
<feature type="chain" id="PRO_0000317314" description="Ribosome biogenesis protein nsa2">
    <location>
        <begin position="1"/>
        <end position="260"/>
    </location>
</feature>
<feature type="region of interest" description="Disordered" evidence="4">
    <location>
        <begin position="1"/>
        <end position="34"/>
    </location>
</feature>
<feature type="region of interest" description="Disordered" evidence="4">
    <location>
        <begin position="53"/>
        <end position="84"/>
    </location>
</feature>
<feature type="short sequence motif" description="Nuclear localization signal" evidence="3">
    <location>
        <begin position="11"/>
        <end position="18"/>
    </location>
</feature>
<feature type="compositionally biased region" description="Basic residues" evidence="4">
    <location>
        <begin position="13"/>
        <end position="28"/>
    </location>
</feature>
<feature type="compositionally biased region" description="Basic and acidic residues" evidence="4">
    <location>
        <begin position="53"/>
        <end position="73"/>
    </location>
</feature>
<feature type="compositionally biased region" description="Polar residues" evidence="4">
    <location>
        <begin position="74"/>
        <end position="84"/>
    </location>
</feature>
<feature type="modified residue" description="Phosphoserine" evidence="6">
    <location>
        <position position="78"/>
    </location>
</feature>
<feature type="helix" evidence="9">
    <location>
        <begin position="6"/>
        <end position="12"/>
    </location>
</feature>
<feature type="helix" evidence="9">
    <location>
        <begin position="19"/>
        <end position="41"/>
    </location>
</feature>
<feature type="helix" evidence="9">
    <location>
        <begin position="45"/>
        <end position="53"/>
    </location>
</feature>
<feature type="turn" evidence="8">
    <location>
        <begin position="174"/>
        <end position="176"/>
    </location>
</feature>
<feature type="strand" evidence="8">
    <location>
        <begin position="180"/>
        <end position="184"/>
    </location>
</feature>
<feature type="turn" evidence="8">
    <location>
        <begin position="186"/>
        <end position="188"/>
    </location>
</feature>
<feature type="strand" evidence="8">
    <location>
        <begin position="191"/>
        <end position="201"/>
    </location>
</feature>
<feature type="helix" evidence="8">
    <location>
        <begin position="206"/>
        <end position="211"/>
    </location>
</feature>
<feature type="strand" evidence="8">
    <location>
        <begin position="219"/>
        <end position="222"/>
    </location>
</feature>
<feature type="strand" evidence="8">
    <location>
        <begin position="240"/>
        <end position="244"/>
    </location>
</feature>
<feature type="helix" evidence="8">
    <location>
        <begin position="248"/>
        <end position="251"/>
    </location>
</feature>
<feature type="strand" evidence="8">
    <location>
        <begin position="255"/>
        <end position="258"/>
    </location>
</feature>
<accession>Q9UU79</accession>
<name>NSA2_SCHPO</name>
<proteinExistence type="evidence at protein level"/>
<dbReference type="EMBL" id="CU329672">
    <property type="protein sequence ID" value="CAB54867.1"/>
    <property type="molecule type" value="Genomic_DNA"/>
</dbReference>
<dbReference type="PIR" id="T41687">
    <property type="entry name" value="T41687"/>
</dbReference>
<dbReference type="RefSeq" id="NP_588561.1">
    <property type="nucleotide sequence ID" value="NM_001023548.2"/>
</dbReference>
<dbReference type="PDB" id="8ESQ">
    <property type="method" value="EM"/>
    <property type="resolution" value="2.80 A"/>
    <property type="chains" value="r=1-260"/>
</dbReference>
<dbReference type="PDB" id="8ESR">
    <property type="method" value="EM"/>
    <property type="resolution" value="3.20 A"/>
    <property type="chains" value="r=1-260"/>
</dbReference>
<dbReference type="PDB" id="8ETC">
    <property type="method" value="EM"/>
    <property type="resolution" value="3.10 A"/>
    <property type="chains" value="r=1-260"/>
</dbReference>
<dbReference type="PDB" id="8ETG">
    <property type="method" value="EM"/>
    <property type="resolution" value="3.40 A"/>
    <property type="chains" value="r=1-260"/>
</dbReference>
<dbReference type="PDB" id="8ETH">
    <property type="method" value="EM"/>
    <property type="resolution" value="3.80 A"/>
    <property type="chains" value="r=1-260"/>
</dbReference>
<dbReference type="PDB" id="8ETI">
    <property type="method" value="EM"/>
    <property type="resolution" value="3.70 A"/>
    <property type="chains" value="r=1-260"/>
</dbReference>
<dbReference type="PDB" id="8ETJ">
    <property type="method" value="EM"/>
    <property type="resolution" value="3.20 A"/>
    <property type="chains" value="r=1-260"/>
</dbReference>
<dbReference type="PDB" id="8EUP">
    <property type="method" value="EM"/>
    <property type="resolution" value="3.10 A"/>
    <property type="chains" value="r=1-260"/>
</dbReference>
<dbReference type="PDB" id="8EUY">
    <property type="method" value="EM"/>
    <property type="resolution" value="3.00 A"/>
    <property type="chains" value="r=1-260"/>
</dbReference>
<dbReference type="PDB" id="8EV3">
    <property type="method" value="EM"/>
    <property type="resolution" value="3.00 A"/>
    <property type="chains" value="r=1-260"/>
</dbReference>
<dbReference type="PDBsum" id="8ESQ"/>
<dbReference type="PDBsum" id="8ESR"/>
<dbReference type="PDBsum" id="8ETC"/>
<dbReference type="PDBsum" id="8ETG"/>
<dbReference type="PDBsum" id="8ETH"/>
<dbReference type="PDBsum" id="8ETI"/>
<dbReference type="PDBsum" id="8ETJ"/>
<dbReference type="PDBsum" id="8EUP"/>
<dbReference type="PDBsum" id="8EUY"/>
<dbReference type="PDBsum" id="8EV3"/>
<dbReference type="SMR" id="Q9UU79"/>
<dbReference type="BioGRID" id="275978">
    <property type="interactions" value="8"/>
</dbReference>
<dbReference type="FunCoup" id="Q9UU79">
    <property type="interactions" value="580"/>
</dbReference>
<dbReference type="STRING" id="284812.Q9UU79"/>
<dbReference type="iPTMnet" id="Q9UU79"/>
<dbReference type="PaxDb" id="4896-SPCP1E11.08.1"/>
<dbReference type="EnsemblFungi" id="SPCP1E11.08.1">
    <property type="protein sequence ID" value="SPCP1E11.08.1:pep"/>
    <property type="gene ID" value="SPCP1E11.08"/>
</dbReference>
<dbReference type="GeneID" id="2539413"/>
<dbReference type="KEGG" id="spo:2539413"/>
<dbReference type="PomBase" id="SPCP1E11.08">
    <property type="gene designation" value="nsa2"/>
</dbReference>
<dbReference type="VEuPathDB" id="FungiDB:SPCP1E11.08"/>
<dbReference type="eggNOG" id="KOG3163">
    <property type="taxonomic scope" value="Eukaryota"/>
</dbReference>
<dbReference type="HOGENOM" id="CLU_1070048_0_0_1"/>
<dbReference type="InParanoid" id="Q9UU79"/>
<dbReference type="OMA" id="TNTPEND"/>
<dbReference type="PhylomeDB" id="Q9UU79"/>
<dbReference type="PRO" id="PR:Q9UU79"/>
<dbReference type="Proteomes" id="UP000002485">
    <property type="component" value="Chromosome III"/>
</dbReference>
<dbReference type="GO" id="GO:0005730">
    <property type="term" value="C:nucleolus"/>
    <property type="evidence" value="ECO:0007669"/>
    <property type="project" value="UniProtKB-SubCell"/>
</dbReference>
<dbReference type="GO" id="GO:0005634">
    <property type="term" value="C:nucleus"/>
    <property type="evidence" value="ECO:0007005"/>
    <property type="project" value="PomBase"/>
</dbReference>
<dbReference type="GO" id="GO:0030684">
    <property type="term" value="C:preribosome"/>
    <property type="evidence" value="ECO:0000314"/>
    <property type="project" value="PomBase"/>
</dbReference>
<dbReference type="GO" id="GO:0030687">
    <property type="term" value="C:preribosome, large subunit precursor"/>
    <property type="evidence" value="ECO:0000318"/>
    <property type="project" value="GO_Central"/>
</dbReference>
<dbReference type="GO" id="GO:1902626">
    <property type="term" value="P:assembly of large subunit precursor of preribosome"/>
    <property type="evidence" value="ECO:0000269"/>
    <property type="project" value="PomBase"/>
</dbReference>
<dbReference type="GO" id="GO:0000460">
    <property type="term" value="P:maturation of 5.8S rRNA"/>
    <property type="evidence" value="ECO:0000318"/>
    <property type="project" value="GO_Central"/>
</dbReference>
<dbReference type="GO" id="GO:0000470">
    <property type="term" value="P:maturation of LSU-rRNA"/>
    <property type="evidence" value="ECO:0000318"/>
    <property type="project" value="GO_Central"/>
</dbReference>
<dbReference type="CDD" id="cd11381">
    <property type="entry name" value="NSA2"/>
    <property type="match status" value="1"/>
</dbReference>
<dbReference type="FunFam" id="2.40.10.310:FF:000001">
    <property type="entry name" value="NSA2, ribosome biogenesis homolog"/>
    <property type="match status" value="1"/>
</dbReference>
<dbReference type="Gene3D" id="2.40.10.310">
    <property type="match status" value="1"/>
</dbReference>
<dbReference type="InterPro" id="IPR039411">
    <property type="entry name" value="NSA2_fam"/>
</dbReference>
<dbReference type="InterPro" id="IPR022309">
    <property type="entry name" value="Ribosomal_Se8/biogenesis_NSA2"/>
</dbReference>
<dbReference type="PANTHER" id="PTHR12642">
    <property type="entry name" value="RIBOSOME BIOGENESIS PROTEIN NSA2 HOMOLOG"/>
    <property type="match status" value="1"/>
</dbReference>
<dbReference type="Pfam" id="PF01201">
    <property type="entry name" value="Ribosomal_S8e"/>
    <property type="match status" value="1"/>
</dbReference>
<keyword id="KW-0002">3D-structure</keyword>
<keyword id="KW-0539">Nucleus</keyword>
<keyword id="KW-0597">Phosphoprotein</keyword>
<keyword id="KW-1185">Reference proteome</keyword>
<keyword id="KW-0687">Ribonucleoprotein</keyword>
<keyword id="KW-0690">Ribosome biogenesis</keyword>
<keyword id="KW-0698">rRNA processing</keyword>
<sequence>MPQNEYIEESIRKHGRRFDHEERKRKKAAREAHDASLYAQKTRGIKAKLYQEKRRKEKIQMKKTIKQHEERNATQRGSDAQTQGAVPTYLLDREQESQAKMLSSAVKQKRKEKAAKYSVPLPQVRGVAEEEMFKVIRTGKSKKNSWKRMITKATFVGDGFTRRPVKYERFIRPMALRQKKANVTHKELGVTMQLPIIGVKKNPQSPTYTQLGVLTKGTVIEVNVSELGLVTSGGKVVWGKYAQITNNPELDGCVNALLLT</sequence>
<evidence type="ECO:0000250" key="1"/>
<evidence type="ECO:0000250" key="2">
    <source>
        <dbReference type="UniProtKB" id="P40078"/>
    </source>
</evidence>
<evidence type="ECO:0000255" key="3">
    <source>
        <dbReference type="PROSITE-ProRule" id="PRU00768"/>
    </source>
</evidence>
<evidence type="ECO:0000256" key="4">
    <source>
        <dbReference type="SAM" id="MobiDB-lite"/>
    </source>
</evidence>
<evidence type="ECO:0000269" key="5">
    <source>
    </source>
</evidence>
<evidence type="ECO:0000269" key="6">
    <source>
    </source>
</evidence>
<evidence type="ECO:0000305" key="7"/>
<evidence type="ECO:0007829" key="8">
    <source>
        <dbReference type="PDB" id="8ETC"/>
    </source>
</evidence>
<evidence type="ECO:0007829" key="9">
    <source>
        <dbReference type="PDB" id="8EUY"/>
    </source>
</evidence>
<gene>
    <name type="primary">nsa2</name>
    <name type="ORF">SPCP1E11.08</name>
</gene>
<organism>
    <name type="scientific">Schizosaccharomyces pombe (strain 972 / ATCC 24843)</name>
    <name type="common">Fission yeast</name>
    <dbReference type="NCBI Taxonomy" id="284812"/>
    <lineage>
        <taxon>Eukaryota</taxon>
        <taxon>Fungi</taxon>
        <taxon>Dikarya</taxon>
        <taxon>Ascomycota</taxon>
        <taxon>Taphrinomycotina</taxon>
        <taxon>Schizosaccharomycetes</taxon>
        <taxon>Schizosaccharomycetales</taxon>
        <taxon>Schizosaccharomycetaceae</taxon>
        <taxon>Schizosaccharomyces</taxon>
    </lineage>
</organism>
<protein>
    <recommendedName>
        <fullName>Ribosome biogenesis protein nsa2</fullName>
    </recommendedName>
</protein>
<reference key="1">
    <citation type="journal article" date="2002" name="Nature">
        <title>The genome sequence of Schizosaccharomyces pombe.</title>
        <authorList>
            <person name="Wood V."/>
            <person name="Gwilliam R."/>
            <person name="Rajandream M.A."/>
            <person name="Lyne M.H."/>
            <person name="Lyne R."/>
            <person name="Stewart A."/>
            <person name="Sgouros J.G."/>
            <person name="Peat N."/>
            <person name="Hayles J."/>
            <person name="Baker S.G."/>
            <person name="Basham D."/>
            <person name="Bowman S."/>
            <person name="Brooks K."/>
            <person name="Brown D."/>
            <person name="Brown S."/>
            <person name="Chillingworth T."/>
            <person name="Churcher C.M."/>
            <person name="Collins M."/>
            <person name="Connor R."/>
            <person name="Cronin A."/>
            <person name="Davis P."/>
            <person name="Feltwell T."/>
            <person name="Fraser A."/>
            <person name="Gentles S."/>
            <person name="Goble A."/>
            <person name="Hamlin N."/>
            <person name="Harris D.E."/>
            <person name="Hidalgo J."/>
            <person name="Hodgson G."/>
            <person name="Holroyd S."/>
            <person name="Hornsby T."/>
            <person name="Howarth S."/>
            <person name="Huckle E.J."/>
            <person name="Hunt S."/>
            <person name="Jagels K."/>
            <person name="James K.D."/>
            <person name="Jones L."/>
            <person name="Jones M."/>
            <person name="Leather S."/>
            <person name="McDonald S."/>
            <person name="McLean J."/>
            <person name="Mooney P."/>
            <person name="Moule S."/>
            <person name="Mungall K.L."/>
            <person name="Murphy L.D."/>
            <person name="Niblett D."/>
            <person name="Odell C."/>
            <person name="Oliver K."/>
            <person name="O'Neil S."/>
            <person name="Pearson D."/>
            <person name="Quail M.A."/>
            <person name="Rabbinowitsch E."/>
            <person name="Rutherford K.M."/>
            <person name="Rutter S."/>
            <person name="Saunders D."/>
            <person name="Seeger K."/>
            <person name="Sharp S."/>
            <person name="Skelton J."/>
            <person name="Simmonds M.N."/>
            <person name="Squares R."/>
            <person name="Squares S."/>
            <person name="Stevens K."/>
            <person name="Taylor K."/>
            <person name="Taylor R.G."/>
            <person name="Tivey A."/>
            <person name="Walsh S.V."/>
            <person name="Warren T."/>
            <person name="Whitehead S."/>
            <person name="Woodward J.R."/>
            <person name="Volckaert G."/>
            <person name="Aert R."/>
            <person name="Robben J."/>
            <person name="Grymonprez B."/>
            <person name="Weltjens I."/>
            <person name="Vanstreels E."/>
            <person name="Rieger M."/>
            <person name="Schaefer M."/>
            <person name="Mueller-Auer S."/>
            <person name="Gabel C."/>
            <person name="Fuchs M."/>
            <person name="Duesterhoeft A."/>
            <person name="Fritzc C."/>
            <person name="Holzer E."/>
            <person name="Moestl D."/>
            <person name="Hilbert H."/>
            <person name="Borzym K."/>
            <person name="Langer I."/>
            <person name="Beck A."/>
            <person name="Lehrach H."/>
            <person name="Reinhardt R."/>
            <person name="Pohl T.M."/>
            <person name="Eger P."/>
            <person name="Zimmermann W."/>
            <person name="Wedler H."/>
            <person name="Wambutt R."/>
            <person name="Purnelle B."/>
            <person name="Goffeau A."/>
            <person name="Cadieu E."/>
            <person name="Dreano S."/>
            <person name="Gloux S."/>
            <person name="Lelaure V."/>
            <person name="Mottier S."/>
            <person name="Galibert F."/>
            <person name="Aves S.J."/>
            <person name="Xiang Z."/>
            <person name="Hunt C."/>
            <person name="Moore K."/>
            <person name="Hurst S.M."/>
            <person name="Lucas M."/>
            <person name="Rochet M."/>
            <person name="Gaillardin C."/>
            <person name="Tallada V.A."/>
            <person name="Garzon A."/>
            <person name="Thode G."/>
            <person name="Daga R.R."/>
            <person name="Cruzado L."/>
            <person name="Jimenez J."/>
            <person name="Sanchez M."/>
            <person name="del Rey F."/>
            <person name="Benito J."/>
            <person name="Dominguez A."/>
            <person name="Revuelta J.L."/>
            <person name="Moreno S."/>
            <person name="Armstrong J."/>
            <person name="Forsburg S.L."/>
            <person name="Cerutti L."/>
            <person name="Lowe T."/>
            <person name="McCombie W.R."/>
            <person name="Paulsen I."/>
            <person name="Potashkin J."/>
            <person name="Shpakovski G.V."/>
            <person name="Ussery D."/>
            <person name="Barrell B.G."/>
            <person name="Nurse P."/>
        </authorList>
    </citation>
    <scope>NUCLEOTIDE SEQUENCE [LARGE SCALE GENOMIC DNA]</scope>
    <source>
        <strain>972 / ATCC 24843</strain>
    </source>
</reference>
<reference key="2">
    <citation type="journal article" date="2006" name="Nat. Biotechnol.">
        <title>ORFeome cloning and global analysis of protein localization in the fission yeast Schizosaccharomyces pombe.</title>
        <authorList>
            <person name="Matsuyama A."/>
            <person name="Arai R."/>
            <person name="Yashiroda Y."/>
            <person name="Shirai A."/>
            <person name="Kamata A."/>
            <person name="Sekido S."/>
            <person name="Kobayashi Y."/>
            <person name="Hashimoto A."/>
            <person name="Hamamoto M."/>
            <person name="Hiraoka Y."/>
            <person name="Horinouchi S."/>
            <person name="Yoshida M."/>
        </authorList>
    </citation>
    <scope>SUBCELLULAR LOCATION [LARGE SCALE ANALYSIS]</scope>
</reference>
<reference key="3">
    <citation type="journal article" date="2008" name="J. Proteome Res.">
        <title>Phosphoproteome analysis of fission yeast.</title>
        <authorList>
            <person name="Wilson-Grady J.T."/>
            <person name="Villen J."/>
            <person name="Gygi S.P."/>
        </authorList>
    </citation>
    <scope>PHOSPHORYLATION [LARGE SCALE ANALYSIS] AT SER-78</scope>
    <scope>IDENTIFICATION BY MASS SPECTROMETRY</scope>
</reference>